<sequence>MKPDRDTLDEYFEYDAEEFLVSLALLITEGRTPECSVKGRTESFHCPPAQSCYPVTTKHECSDKLAQCRQARRTRSEVTLLWKNNLPIMVEMMLLPDCCYSDDGPTTEGIDLNDPAIKQDALLLERWILEPVPRQNGDRFIEEKTLLLAVRSFVFFSQLSAWLSVSHGAIPRNILYRISAADVDLQWNFSQTPIEHVFPVPNVSHNVALKVSVQSLPRQSNYPVLTCSIHTNIGLYEKRIQQHKLKTHQHHNPNEAEQCGTNSSQRLCSKQTWTMAPESVLHAKSGPSPEYTAAVKNIKLYPGTGSKSDHGTSQANILGFSGIGDIKSQETSVRTLKSFSMVDSSISNRQSFWQSAGETNPLIGSLIQERQEIIARIAQHLIHCDPSTSHVSGRPFNTQESSSLHSKLFRVSQENENVGKGKEAFSMTFGSPEFSSPEDTNEGKIRLKPETPRSETCISNDFYSHMPVGETNPLIGSLLQERQDVIARIAQHLEHIDPTASHIPRQSFNMHDSSSVASKVFRSSYEDKNLLKKNKDESSVSISHTKCSLLGDISDGKNLVPNKCFTSFKNNSKEKCSLKHQTRNQCQNNPSEIIQSTYQETQNKSSSLSTSSILSQHKENNLDLTSRFKEQEMSNGIDKQYSNCTTIDKQICTNKYKEKIINENYNPKFFGNLQSDDSKKNDSKIKVTVLEMSEYLNKYESMSSNKDSKRPKTCEQNTQLNSIENYLNKDNEGFKCKKSDQLKNEQDKQEDPTNEKSQNYSQRRSIKDCLSTCEQPKNTEVLRTTLKHSNVWRKHNFHSLDGTSTRAFHPQTGLPLLSSPVPQRKTQSGCFDLDSSLLHLKSFSSRSPRPCLNIEDDPDIHEKPFLSSSAPPITSLSLLGNFEESVLNYRFDPLGIVDGFTAEVGASGAFCPTHLTLPVEVSFYSVSDDNAPSPYMGVITLESLGKRGYRVPPSGTIQVTLFNPNKTVVKMFVVIYDLRDMPANHQTFLRQRTFSVPVKQEVKRSVNKENIRHTEERLLRYLIHLRFQSSKSGKIYLHRDVRLLFSRKSMEVDSGAAYELKSYTESPTNPQFSPRC</sequence>
<accession>Q32MH5</accession>
<accession>A8KA52</accession>
<accession>B4DEP5</accession>
<accession>B4DF40</accession>
<accession>F5H8G0</accession>
<accession>Q32MH6</accession>
<accession>Q4G0R7</accession>
<accession>Q5XJ16</accession>
<accession>Q6PDA3</accession>
<accession>Q9NV24</accession>
<accession>Q9P2H7</accession>
<evidence type="ECO:0000250" key="1">
    <source>
        <dbReference type="UniProtKB" id="Q69ZK7"/>
    </source>
</evidence>
<evidence type="ECO:0000250" key="2">
    <source>
        <dbReference type="UniProtKB" id="Q7JXG9"/>
    </source>
</evidence>
<evidence type="ECO:0000256" key="3">
    <source>
        <dbReference type="SAM" id="MobiDB-lite"/>
    </source>
</evidence>
<evidence type="ECO:0000269" key="4">
    <source>
    </source>
</evidence>
<evidence type="ECO:0000269" key="5">
    <source>
    </source>
</evidence>
<evidence type="ECO:0000269" key="6">
    <source>
    </source>
</evidence>
<evidence type="ECO:0000269" key="7">
    <source ref="4"/>
</evidence>
<evidence type="ECO:0000303" key="8">
    <source>
    </source>
</evidence>
<evidence type="ECO:0000303" key="9">
    <source>
    </source>
</evidence>
<evidence type="ECO:0000305" key="10"/>
<evidence type="ECO:0000312" key="11">
    <source>
        <dbReference type="HGNC" id="HGNC:25609"/>
    </source>
</evidence>
<feature type="chain" id="PRO_0000315613" description="Atos homolog protein A">
    <location>
        <begin position="1"/>
        <end position="1076"/>
    </location>
</feature>
<feature type="region of interest" description="Transactivation domain 1 (TAD1)" evidence="1">
    <location>
        <begin position="24"/>
        <end position="32"/>
    </location>
</feature>
<feature type="region of interest" description="Disordered" evidence="3">
    <location>
        <begin position="700"/>
        <end position="721"/>
    </location>
</feature>
<feature type="region of interest" description="Disordered" evidence="3">
    <location>
        <begin position="739"/>
        <end position="765"/>
    </location>
</feature>
<feature type="region of interest" description="Required for macropage invasion" evidence="1">
    <location>
        <begin position="878"/>
        <end position="935"/>
    </location>
</feature>
<feature type="region of interest" description="Transactivation domain 2 (TAD2)" evidence="1">
    <location>
        <begin position="962"/>
        <end position="970"/>
    </location>
</feature>
<feature type="compositionally biased region" description="Basic and acidic residues" evidence="3">
    <location>
        <begin position="739"/>
        <end position="754"/>
    </location>
</feature>
<feature type="splice variant" id="VSP_042435" description="In isoform 3." evidence="8">
    <original>MKPDR</original>
    <variation>MVFSGNKGLHRE</variation>
    <location>
        <begin position="1"/>
        <end position="5"/>
    </location>
</feature>
<feature type="splice variant" id="VSP_030580" description="In isoform 2." evidence="8 9">
    <original>TLFN</original>
    <variation>VCVL</variation>
    <location>
        <begin position="960"/>
        <end position="963"/>
    </location>
</feature>
<feature type="splice variant" id="VSP_030581" description="In isoform 2." evidence="8 9">
    <location>
        <begin position="964"/>
        <end position="1076"/>
    </location>
</feature>
<feature type="sequence variant" id="VAR_038258" description="In dbSNP:rs8036680.">
    <original>Q</original>
    <variation>R</variation>
    <location>
        <position position="135"/>
    </location>
</feature>
<feature type="sequence variant" id="VAR_038259" description="In dbSNP:rs12915981." evidence="4 5 6 7">
    <original>V</original>
    <variation>I</variation>
    <location>
        <position position="560"/>
    </location>
</feature>
<feature type="sequence conflict" description="In Ref. 5; AAI09128." evidence="10" ref="5">
    <original>T</original>
    <variation>I</variation>
    <location>
        <position position="41"/>
    </location>
</feature>
<feature type="sequence conflict" description="In Ref. 2; BAF85606." evidence="10" ref="2">
    <original>V</original>
    <variation>A</variation>
    <location>
        <position position="207"/>
    </location>
</feature>
<feature type="sequence conflict" description="In Ref. 2; BAF85606/BAG57301 and 5; AAI09129." evidence="10" ref="2 5">
    <original>T</original>
    <variation>A</variation>
    <location>
        <position position="610"/>
    </location>
</feature>
<feature type="sequence conflict" description="In Ref. 2; BAG57301." evidence="10" ref="2">
    <original>Y</original>
    <variation>C</variation>
    <location>
        <position position="641"/>
    </location>
</feature>
<feature type="sequence conflict" description="In Ref. 2; BAF85606." evidence="10" ref="2">
    <original>E</original>
    <variation>G</variation>
    <location>
        <position position="750"/>
    </location>
</feature>
<feature type="sequence conflict" description="In Ref. 2; BAA91936." evidence="10" ref="2">
    <original>T</original>
    <variation>A</variation>
    <location>
        <position position="956"/>
    </location>
</feature>
<feature type="sequence conflict" description="In Ref. 5; AAH83498." evidence="10" ref="5">
    <original>Q</original>
    <variation>R</variation>
    <location>
        <position position="1028"/>
    </location>
</feature>
<gene>
    <name evidence="11" type="primary">ATOSA</name>
    <name type="synonym">FAM214A</name>
    <name type="synonym">KIAA1370</name>
</gene>
<comment type="function">
    <text evidence="1">Transcription regulator that syncronizes transcriptional and translational programs to promote macrophage invasion of tissues.</text>
</comment>
<comment type="interaction">
    <interactant intactId="EBI-2866142">
        <id>Q32MH5</id>
    </interactant>
    <interactant intactId="EBI-618309">
        <id>Q08379</id>
        <label>GOLGA2</label>
    </interactant>
    <organismsDiffer>false</organismsDiffer>
    <experiments>3</experiments>
</comment>
<comment type="interaction">
    <interactant intactId="EBI-2866142">
        <id>Q32MH5</id>
    </interactant>
    <interactant intactId="EBI-10171697">
        <id>Q6A162</id>
        <label>KRT40</label>
    </interactant>
    <organismsDiffer>false</organismsDiffer>
    <experiments>3</experiments>
</comment>
<comment type="interaction">
    <interactant intactId="EBI-2866142">
        <id>Q32MH5</id>
    </interactant>
    <interactant intactId="EBI-1045155">
        <id>P43360</id>
        <label>MAGEA6</label>
    </interactant>
    <organismsDiffer>false</organismsDiffer>
    <experiments>3</experiments>
</comment>
<comment type="interaction">
    <interactant intactId="EBI-2866142">
        <id>Q32MH5</id>
    </interactant>
    <interactant intactId="EBI-10172526">
        <id>Q9UJV3-2</id>
        <label>MID2</label>
    </interactant>
    <organismsDiffer>false</organismsDiffer>
    <experiments>3</experiments>
</comment>
<comment type="interaction">
    <interactant intactId="EBI-2866142">
        <id>Q32MH5</id>
    </interactant>
    <interactant intactId="EBI-2212028">
        <id>Q9Y2D8</id>
        <label>SSX2IP</label>
    </interactant>
    <organismsDiffer>false</organismsDiffer>
    <experiments>3</experiments>
</comment>
<comment type="interaction">
    <interactant intactId="EBI-2866142">
        <id>Q32MH5</id>
    </interactant>
    <interactant intactId="EBI-719493">
        <id>P14373</id>
        <label>TRIM27</label>
    </interactant>
    <organismsDiffer>false</organismsDiffer>
    <experiments>3</experiments>
</comment>
<comment type="subcellular location">
    <subcellularLocation>
        <location evidence="2">Nucleus</location>
    </subcellularLocation>
</comment>
<comment type="alternative products">
    <event type="alternative splicing"/>
    <isoform>
        <id>Q32MH5-1</id>
        <name>1</name>
        <sequence type="displayed"/>
    </isoform>
    <isoform>
        <id>Q32MH5-2</id>
        <name>2</name>
        <sequence type="described" ref="VSP_030580 VSP_030581"/>
    </isoform>
    <isoform>
        <id>Q32MH5-3</id>
        <name>3</name>
        <sequence type="described" ref="VSP_042435"/>
    </isoform>
</comment>
<comment type="domain">
    <text evidence="1">The protein contains 2 transactivation domains (TAD). Each of these domains may be required for transcriptional activation of a subset of target genes.</text>
</comment>
<comment type="similarity">
    <text evidence="10">Belongs to the ATOS family.</text>
</comment>
<comment type="sequence caution" evidence="10">
    <conflict type="erroneous initiation">
        <sequence resource="EMBL-CDS" id="BAA91936"/>
    </conflict>
    <text>Truncated N-terminus.</text>
</comment>
<comment type="sequence caution" evidence="10">
    <conflict type="erroneous initiation">
        <sequence resource="EMBL-CDS" id="BAA92608"/>
    </conflict>
    <text>Extended N-terminus.</text>
</comment>
<comment type="sequence caution" evidence="10">
    <conflict type="erroneous initiation">
        <sequence resource="EMBL-CDS" id="BAG57156"/>
    </conflict>
    <text>Truncated N-terminus.</text>
</comment>
<reference key="1">
    <citation type="journal article" date="2000" name="DNA Res.">
        <title>Prediction of the coding sequences of unidentified human genes. XVI. The complete sequences of 150 new cDNA clones from brain which code for large proteins in vitro.</title>
        <authorList>
            <person name="Nagase T."/>
            <person name="Kikuno R."/>
            <person name="Ishikawa K."/>
            <person name="Hirosawa M."/>
            <person name="Ohara O."/>
        </authorList>
    </citation>
    <scope>NUCLEOTIDE SEQUENCE [LARGE SCALE MRNA] (ISOFORM 1)</scope>
    <scope>VARIANT ILE-560</scope>
    <source>
        <tissue>Brain</tissue>
    </source>
</reference>
<reference key="2">
    <citation type="journal article" date="2004" name="Nat. Genet.">
        <title>Complete sequencing and characterization of 21,243 full-length human cDNAs.</title>
        <authorList>
            <person name="Ota T."/>
            <person name="Suzuki Y."/>
            <person name="Nishikawa T."/>
            <person name="Otsuki T."/>
            <person name="Sugiyama T."/>
            <person name="Irie R."/>
            <person name="Wakamatsu A."/>
            <person name="Hayashi K."/>
            <person name="Sato H."/>
            <person name="Nagai K."/>
            <person name="Kimura K."/>
            <person name="Makita H."/>
            <person name="Sekine M."/>
            <person name="Obayashi M."/>
            <person name="Nishi T."/>
            <person name="Shibahara T."/>
            <person name="Tanaka T."/>
            <person name="Ishii S."/>
            <person name="Yamamoto J."/>
            <person name="Saito K."/>
            <person name="Kawai Y."/>
            <person name="Isono Y."/>
            <person name="Nakamura Y."/>
            <person name="Nagahari K."/>
            <person name="Murakami K."/>
            <person name="Yasuda T."/>
            <person name="Iwayanagi T."/>
            <person name="Wagatsuma M."/>
            <person name="Shiratori A."/>
            <person name="Sudo H."/>
            <person name="Hosoiri T."/>
            <person name="Kaku Y."/>
            <person name="Kodaira H."/>
            <person name="Kondo H."/>
            <person name="Sugawara M."/>
            <person name="Takahashi M."/>
            <person name="Kanda K."/>
            <person name="Yokoi T."/>
            <person name="Furuya T."/>
            <person name="Kikkawa E."/>
            <person name="Omura Y."/>
            <person name="Abe K."/>
            <person name="Kamihara K."/>
            <person name="Katsuta N."/>
            <person name="Sato K."/>
            <person name="Tanikawa M."/>
            <person name="Yamazaki M."/>
            <person name="Ninomiya K."/>
            <person name="Ishibashi T."/>
            <person name="Yamashita H."/>
            <person name="Murakawa K."/>
            <person name="Fujimori K."/>
            <person name="Tanai H."/>
            <person name="Kimata M."/>
            <person name="Watanabe M."/>
            <person name="Hiraoka S."/>
            <person name="Chiba Y."/>
            <person name="Ishida S."/>
            <person name="Ono Y."/>
            <person name="Takiguchi S."/>
            <person name="Watanabe S."/>
            <person name="Yosida M."/>
            <person name="Hotuta T."/>
            <person name="Kusano J."/>
            <person name="Kanehori K."/>
            <person name="Takahashi-Fujii A."/>
            <person name="Hara H."/>
            <person name="Tanase T.-O."/>
            <person name="Nomura Y."/>
            <person name="Togiya S."/>
            <person name="Komai F."/>
            <person name="Hara R."/>
            <person name="Takeuchi K."/>
            <person name="Arita M."/>
            <person name="Imose N."/>
            <person name="Musashino K."/>
            <person name="Yuuki H."/>
            <person name="Oshima A."/>
            <person name="Sasaki N."/>
            <person name="Aotsuka S."/>
            <person name="Yoshikawa Y."/>
            <person name="Matsunawa H."/>
            <person name="Ichihara T."/>
            <person name="Shiohata N."/>
            <person name="Sano S."/>
            <person name="Moriya S."/>
            <person name="Momiyama H."/>
            <person name="Satoh N."/>
            <person name="Takami S."/>
            <person name="Terashima Y."/>
            <person name="Suzuki O."/>
            <person name="Nakagawa S."/>
            <person name="Senoh A."/>
            <person name="Mizoguchi H."/>
            <person name="Goto Y."/>
            <person name="Shimizu F."/>
            <person name="Wakebe H."/>
            <person name="Hishigaki H."/>
            <person name="Watanabe T."/>
            <person name="Sugiyama A."/>
            <person name="Takemoto M."/>
            <person name="Kawakami B."/>
            <person name="Yamazaki M."/>
            <person name="Watanabe K."/>
            <person name="Kumagai A."/>
            <person name="Itakura S."/>
            <person name="Fukuzumi Y."/>
            <person name="Fujimori Y."/>
            <person name="Komiyama M."/>
            <person name="Tashiro H."/>
            <person name="Tanigami A."/>
            <person name="Fujiwara T."/>
            <person name="Ono T."/>
            <person name="Yamada K."/>
            <person name="Fujii Y."/>
            <person name="Ozaki K."/>
            <person name="Hirao M."/>
            <person name="Ohmori Y."/>
            <person name="Kawabata A."/>
            <person name="Hikiji T."/>
            <person name="Kobatake N."/>
            <person name="Inagaki H."/>
            <person name="Ikema Y."/>
            <person name="Okamoto S."/>
            <person name="Okitani R."/>
            <person name="Kawakami T."/>
            <person name="Noguchi S."/>
            <person name="Itoh T."/>
            <person name="Shigeta K."/>
            <person name="Senba T."/>
            <person name="Matsumura K."/>
            <person name="Nakajima Y."/>
            <person name="Mizuno T."/>
            <person name="Morinaga M."/>
            <person name="Sasaki M."/>
            <person name="Togashi T."/>
            <person name="Oyama M."/>
            <person name="Hata H."/>
            <person name="Watanabe M."/>
            <person name="Komatsu T."/>
            <person name="Mizushima-Sugano J."/>
            <person name="Satoh T."/>
            <person name="Shirai Y."/>
            <person name="Takahashi Y."/>
            <person name="Nakagawa K."/>
            <person name="Okumura K."/>
            <person name="Nagase T."/>
            <person name="Nomura N."/>
            <person name="Kikuchi H."/>
            <person name="Masuho Y."/>
            <person name="Yamashita R."/>
            <person name="Nakai K."/>
            <person name="Yada T."/>
            <person name="Nakamura Y."/>
            <person name="Ohara O."/>
            <person name="Isogai T."/>
            <person name="Sugano S."/>
        </authorList>
    </citation>
    <scope>NUCLEOTIDE SEQUENCE [LARGE SCALE MRNA] (ISOFORMS 1 AND 3)</scope>
    <scope>NUCLEOTIDE SEQUENCE [LARGE SCALE MRNA] OF 189-1076 (ISOFORM 2)</scope>
    <scope>VARIANT ILE-560</scope>
    <source>
        <tissue>Cerebellum</tissue>
        <tissue>Placenta</tissue>
        <tissue>Trachea</tissue>
    </source>
</reference>
<reference key="3">
    <citation type="journal article" date="2006" name="Nature">
        <title>Analysis of the DNA sequence and duplication history of human chromosome 15.</title>
        <authorList>
            <person name="Zody M.C."/>
            <person name="Garber M."/>
            <person name="Sharpe T."/>
            <person name="Young S.K."/>
            <person name="Rowen L."/>
            <person name="O'Neill K."/>
            <person name="Whittaker C.A."/>
            <person name="Kamal M."/>
            <person name="Chang J.L."/>
            <person name="Cuomo C.A."/>
            <person name="Dewar K."/>
            <person name="FitzGerald M.G."/>
            <person name="Kodira C.D."/>
            <person name="Madan A."/>
            <person name="Qin S."/>
            <person name="Yang X."/>
            <person name="Abbasi N."/>
            <person name="Abouelleil A."/>
            <person name="Arachchi H.M."/>
            <person name="Baradarani L."/>
            <person name="Birditt B."/>
            <person name="Bloom S."/>
            <person name="Bloom T."/>
            <person name="Borowsky M.L."/>
            <person name="Burke J."/>
            <person name="Butler J."/>
            <person name="Cook A."/>
            <person name="DeArellano K."/>
            <person name="DeCaprio D."/>
            <person name="Dorris L. III"/>
            <person name="Dors M."/>
            <person name="Eichler E.E."/>
            <person name="Engels R."/>
            <person name="Fahey J."/>
            <person name="Fleetwood P."/>
            <person name="Friedman C."/>
            <person name="Gearin G."/>
            <person name="Hall J.L."/>
            <person name="Hensley G."/>
            <person name="Johnson E."/>
            <person name="Jones C."/>
            <person name="Kamat A."/>
            <person name="Kaur A."/>
            <person name="Locke D.P."/>
            <person name="Madan A."/>
            <person name="Munson G."/>
            <person name="Jaffe D.B."/>
            <person name="Lui A."/>
            <person name="Macdonald P."/>
            <person name="Mauceli E."/>
            <person name="Naylor J.W."/>
            <person name="Nesbitt R."/>
            <person name="Nicol R."/>
            <person name="O'Leary S.B."/>
            <person name="Ratcliffe A."/>
            <person name="Rounsley S."/>
            <person name="She X."/>
            <person name="Sneddon K.M.B."/>
            <person name="Stewart S."/>
            <person name="Sougnez C."/>
            <person name="Stone S.M."/>
            <person name="Topham K."/>
            <person name="Vincent D."/>
            <person name="Wang S."/>
            <person name="Zimmer A.R."/>
            <person name="Birren B.W."/>
            <person name="Hood L."/>
            <person name="Lander E.S."/>
            <person name="Nusbaum C."/>
        </authorList>
    </citation>
    <scope>NUCLEOTIDE SEQUENCE [LARGE SCALE GENOMIC DNA]</scope>
</reference>
<reference key="4">
    <citation type="submission" date="2005-07" db="EMBL/GenBank/DDBJ databases">
        <authorList>
            <person name="Mural R.J."/>
            <person name="Istrail S."/>
            <person name="Sutton G.G."/>
            <person name="Florea L."/>
            <person name="Halpern A.L."/>
            <person name="Mobarry C.M."/>
            <person name="Lippert R."/>
            <person name="Walenz B."/>
            <person name="Shatkay H."/>
            <person name="Dew I."/>
            <person name="Miller J.R."/>
            <person name="Flanigan M.J."/>
            <person name="Edwards N.J."/>
            <person name="Bolanos R."/>
            <person name="Fasulo D."/>
            <person name="Halldorsson B.V."/>
            <person name="Hannenhalli S."/>
            <person name="Turner R."/>
            <person name="Yooseph S."/>
            <person name="Lu F."/>
            <person name="Nusskern D.R."/>
            <person name="Shue B.C."/>
            <person name="Zheng X.H."/>
            <person name="Zhong F."/>
            <person name="Delcher A.L."/>
            <person name="Huson D.H."/>
            <person name="Kravitz S.A."/>
            <person name="Mouchard L."/>
            <person name="Reinert K."/>
            <person name="Remington K.A."/>
            <person name="Clark A.G."/>
            <person name="Waterman M.S."/>
            <person name="Eichler E.E."/>
            <person name="Adams M.D."/>
            <person name="Hunkapiller M.W."/>
            <person name="Myers E.W."/>
            <person name="Venter J.C."/>
        </authorList>
    </citation>
    <scope>NUCLEOTIDE SEQUENCE [LARGE SCALE GENOMIC DNA]</scope>
    <scope>VARIANT ILE-560</scope>
</reference>
<reference key="5">
    <citation type="journal article" date="2004" name="Genome Res.">
        <title>The status, quality, and expansion of the NIH full-length cDNA project: the Mammalian Gene Collection (MGC).</title>
        <authorList>
            <consortium name="The MGC Project Team"/>
        </authorList>
    </citation>
    <scope>NUCLEOTIDE SEQUENCE [LARGE SCALE MRNA] (ISOFORMS 1 AND 2)</scope>
    <scope>VARIANT ILE-560</scope>
    <source>
        <tissue>Hypothalamus</tissue>
        <tissue>Skin</tissue>
        <tissue>Testis</tissue>
    </source>
</reference>
<dbReference type="EMBL" id="AB037791">
    <property type="protein sequence ID" value="BAA92608.1"/>
    <property type="status" value="ALT_INIT"/>
    <property type="molecule type" value="mRNA"/>
</dbReference>
<dbReference type="EMBL" id="AK001842">
    <property type="protein sequence ID" value="BAA91936.1"/>
    <property type="status" value="ALT_INIT"/>
    <property type="molecule type" value="mRNA"/>
</dbReference>
<dbReference type="EMBL" id="AK292917">
    <property type="protein sequence ID" value="BAF85606.1"/>
    <property type="molecule type" value="mRNA"/>
</dbReference>
<dbReference type="EMBL" id="AK293730">
    <property type="protein sequence ID" value="BAG57156.1"/>
    <property type="status" value="ALT_INIT"/>
    <property type="molecule type" value="mRNA"/>
</dbReference>
<dbReference type="EMBL" id="AK293920">
    <property type="protein sequence ID" value="BAG57301.1"/>
    <property type="molecule type" value="mRNA"/>
</dbReference>
<dbReference type="EMBL" id="AC009754">
    <property type="status" value="NOT_ANNOTATED_CDS"/>
    <property type="molecule type" value="Genomic_DNA"/>
</dbReference>
<dbReference type="EMBL" id="AC025917">
    <property type="status" value="NOT_ANNOTATED_CDS"/>
    <property type="molecule type" value="Genomic_DNA"/>
</dbReference>
<dbReference type="EMBL" id="CH471082">
    <property type="protein sequence ID" value="EAW77460.1"/>
    <property type="molecule type" value="Genomic_DNA"/>
</dbReference>
<dbReference type="EMBL" id="BC040548">
    <property type="protein sequence ID" value="AAH40548.1"/>
    <property type="molecule type" value="mRNA"/>
</dbReference>
<dbReference type="EMBL" id="BC058839">
    <property type="protein sequence ID" value="AAH58839.1"/>
    <property type="molecule type" value="mRNA"/>
</dbReference>
<dbReference type="EMBL" id="BC083498">
    <property type="protein sequence ID" value="AAH83498.1"/>
    <property type="molecule type" value="mRNA"/>
</dbReference>
<dbReference type="EMBL" id="BC109127">
    <property type="protein sequence ID" value="AAI09128.1"/>
    <property type="molecule type" value="mRNA"/>
</dbReference>
<dbReference type="EMBL" id="BC109128">
    <property type="protein sequence ID" value="AAI09129.1"/>
    <property type="molecule type" value="mRNA"/>
</dbReference>
<dbReference type="CCDS" id="CCDS45263.1">
    <molecule id="Q32MH5-1"/>
</dbReference>
<dbReference type="CCDS" id="CCDS66773.1">
    <molecule id="Q32MH5-3"/>
</dbReference>
<dbReference type="RefSeq" id="NP_001273424.1">
    <molecule id="Q32MH5-3"/>
    <property type="nucleotide sequence ID" value="NM_001286495.2"/>
</dbReference>
<dbReference type="RefSeq" id="NP_001371942.1">
    <molecule id="Q32MH5-1"/>
    <property type="nucleotide sequence ID" value="NM_001385013.1"/>
</dbReference>
<dbReference type="RefSeq" id="NP_001371943.1">
    <molecule id="Q32MH5-1"/>
    <property type="nucleotide sequence ID" value="NM_001385014.1"/>
</dbReference>
<dbReference type="RefSeq" id="NP_001371944.1">
    <molecule id="Q32MH5-1"/>
    <property type="nucleotide sequence ID" value="NM_001385015.1"/>
</dbReference>
<dbReference type="RefSeq" id="NP_001371945.1">
    <molecule id="Q32MH5-1"/>
    <property type="nucleotide sequence ID" value="NM_001385016.1"/>
</dbReference>
<dbReference type="RefSeq" id="NP_001371946.1">
    <molecule id="Q32MH5-1"/>
    <property type="nucleotide sequence ID" value="NM_001385017.1"/>
</dbReference>
<dbReference type="RefSeq" id="NP_001371947.1">
    <molecule id="Q32MH5-1"/>
    <property type="nucleotide sequence ID" value="NM_001385018.1"/>
</dbReference>
<dbReference type="RefSeq" id="NP_062546.2">
    <molecule id="Q32MH5-1"/>
    <property type="nucleotide sequence ID" value="NM_019600.4"/>
</dbReference>
<dbReference type="RefSeq" id="XP_005254604.1">
    <property type="nucleotide sequence ID" value="XM_005254547.2"/>
</dbReference>
<dbReference type="RefSeq" id="XP_005254605.1">
    <property type="nucleotide sequence ID" value="XM_005254548.2"/>
</dbReference>
<dbReference type="RefSeq" id="XP_011520091.1">
    <property type="nucleotide sequence ID" value="XM_011521789.2"/>
</dbReference>
<dbReference type="RefSeq" id="XP_024305759.1">
    <molecule id="Q32MH5-1"/>
    <property type="nucleotide sequence ID" value="XM_024449991.2"/>
</dbReference>
<dbReference type="RefSeq" id="XP_047288813.1">
    <molecule id="Q32MH5-1"/>
    <property type="nucleotide sequence ID" value="XM_047432857.1"/>
</dbReference>
<dbReference type="BioGRID" id="121108">
    <property type="interactions" value="11"/>
</dbReference>
<dbReference type="FunCoup" id="Q32MH5">
    <property type="interactions" value="681"/>
</dbReference>
<dbReference type="IntAct" id="Q32MH5">
    <property type="interactions" value="10"/>
</dbReference>
<dbReference type="MINT" id="Q32MH5"/>
<dbReference type="STRING" id="9606.ENSP00000443598"/>
<dbReference type="GlyGen" id="Q32MH5">
    <property type="glycosylation" value="2 sites, 1 O-linked glycan (1 site)"/>
</dbReference>
<dbReference type="iPTMnet" id="Q32MH5"/>
<dbReference type="PhosphoSitePlus" id="Q32MH5"/>
<dbReference type="BioMuta" id="FAM214A"/>
<dbReference type="DMDM" id="166218826"/>
<dbReference type="MassIVE" id="Q32MH5"/>
<dbReference type="PaxDb" id="9606-ENSP00000443598"/>
<dbReference type="PeptideAtlas" id="Q32MH5"/>
<dbReference type="ProteomicsDB" id="61600">
    <molecule id="Q32MH5-1"/>
</dbReference>
<dbReference type="ProteomicsDB" id="61601">
    <molecule id="Q32MH5-2"/>
</dbReference>
<dbReference type="ProteomicsDB" id="61602">
    <molecule id="Q32MH5-3"/>
</dbReference>
<dbReference type="Antibodypedia" id="51855">
    <property type="antibodies" value="16 antibodies from 6 providers"/>
</dbReference>
<dbReference type="DNASU" id="56204"/>
<dbReference type="Ensembl" id="ENST00000261844.11">
    <molecule id="Q32MH5-1"/>
    <property type="protein sequence ID" value="ENSP00000261844.7"/>
    <property type="gene ID" value="ENSG00000047346.13"/>
</dbReference>
<dbReference type="Ensembl" id="ENST00000534964.6">
    <molecule id="Q32MH5-2"/>
    <property type="protein sequence ID" value="ENSP00000444447.2"/>
    <property type="gene ID" value="ENSG00000047346.13"/>
</dbReference>
<dbReference type="Ensembl" id="ENST00000546305.6">
    <molecule id="Q32MH5-3"/>
    <property type="protein sequence ID" value="ENSP00000443598.2"/>
    <property type="gene ID" value="ENSG00000047346.13"/>
</dbReference>
<dbReference type="Ensembl" id="ENST00000619572.5">
    <molecule id="Q32MH5-1"/>
    <property type="protein sequence ID" value="ENSP00000484641.1"/>
    <property type="gene ID" value="ENSG00000047346.13"/>
</dbReference>
<dbReference type="GeneID" id="56204"/>
<dbReference type="KEGG" id="hsa:56204"/>
<dbReference type="MANE-Select" id="ENST00000619572.5">
    <property type="protein sequence ID" value="ENSP00000484641.1"/>
    <property type="RefSeq nucleotide sequence ID" value="NM_001385016.1"/>
    <property type="RefSeq protein sequence ID" value="NP_001371945.1"/>
</dbReference>
<dbReference type="UCSC" id="uc002acg.6">
    <molecule id="Q32MH5-1"/>
    <property type="organism name" value="human"/>
</dbReference>
<dbReference type="AGR" id="HGNC:25609"/>
<dbReference type="CTD" id="56204"/>
<dbReference type="DisGeNET" id="56204"/>
<dbReference type="GeneCards" id="ATOSA"/>
<dbReference type="HGNC" id="HGNC:25609">
    <property type="gene designation" value="ATOSA"/>
</dbReference>
<dbReference type="HPA" id="ENSG00000047346">
    <property type="expression patterns" value="Low tissue specificity"/>
</dbReference>
<dbReference type="MIM" id="620168">
    <property type="type" value="gene"/>
</dbReference>
<dbReference type="neXtProt" id="NX_Q32MH5"/>
<dbReference type="OpenTargets" id="ENSG00000047346"/>
<dbReference type="PharmGKB" id="PA142671609"/>
<dbReference type="VEuPathDB" id="HostDB:ENSG00000047346"/>
<dbReference type="eggNOG" id="KOG2306">
    <property type="taxonomic scope" value="Eukaryota"/>
</dbReference>
<dbReference type="GeneTree" id="ENSGT00940000157573"/>
<dbReference type="HOGENOM" id="CLU_011957_0_0_1"/>
<dbReference type="InParanoid" id="Q32MH5"/>
<dbReference type="OMA" id="QTHPRSQ"/>
<dbReference type="OrthoDB" id="8625101at2759"/>
<dbReference type="PAN-GO" id="Q32MH5">
    <property type="GO annotations" value="0 GO annotations based on evolutionary models"/>
</dbReference>
<dbReference type="PhylomeDB" id="Q32MH5"/>
<dbReference type="TreeFam" id="TF325496"/>
<dbReference type="PathwayCommons" id="Q32MH5"/>
<dbReference type="SignaLink" id="Q32MH5"/>
<dbReference type="BioGRID-ORCS" id="56204">
    <property type="hits" value="19 hits in 1162 CRISPR screens"/>
</dbReference>
<dbReference type="ChiTaRS" id="FAM214A">
    <property type="organism name" value="human"/>
</dbReference>
<dbReference type="GenomeRNAi" id="56204"/>
<dbReference type="Pharos" id="Q32MH5">
    <property type="development level" value="Tdark"/>
</dbReference>
<dbReference type="PRO" id="PR:Q32MH5"/>
<dbReference type="Proteomes" id="UP000005640">
    <property type="component" value="Chromosome 15"/>
</dbReference>
<dbReference type="RNAct" id="Q32MH5">
    <property type="molecule type" value="protein"/>
</dbReference>
<dbReference type="Bgee" id="ENSG00000047346">
    <property type="expression patterns" value="Expressed in upper arm skin and 183 other cell types or tissues"/>
</dbReference>
<dbReference type="ExpressionAtlas" id="Q32MH5">
    <property type="expression patterns" value="baseline and differential"/>
</dbReference>
<dbReference type="GO" id="GO:0005634">
    <property type="term" value="C:nucleus"/>
    <property type="evidence" value="ECO:0007669"/>
    <property type="project" value="UniProtKB-SubCell"/>
</dbReference>
<dbReference type="InterPro" id="IPR033473">
    <property type="entry name" value="Atos-like_C"/>
</dbReference>
<dbReference type="InterPro" id="IPR025261">
    <property type="entry name" value="Atos-like_cons_dom"/>
</dbReference>
<dbReference type="InterPro" id="IPR051506">
    <property type="entry name" value="ATOS_Transcription_Regulators"/>
</dbReference>
<dbReference type="PANTHER" id="PTHR13199:SF13">
    <property type="entry name" value="ATOS HOMOLOG PROTEIN A"/>
    <property type="match status" value="1"/>
</dbReference>
<dbReference type="PANTHER" id="PTHR13199">
    <property type="entry name" value="GH03947P"/>
    <property type="match status" value="1"/>
</dbReference>
<dbReference type="Pfam" id="PF13889">
    <property type="entry name" value="Chromosome_seg"/>
    <property type="match status" value="1"/>
</dbReference>
<dbReference type="Pfam" id="PF13915">
    <property type="entry name" value="DUF4210"/>
    <property type="match status" value="1"/>
</dbReference>
<dbReference type="SMART" id="SM01177">
    <property type="entry name" value="DUF4210"/>
    <property type="match status" value="1"/>
</dbReference>
<organism>
    <name type="scientific">Homo sapiens</name>
    <name type="common">Human</name>
    <dbReference type="NCBI Taxonomy" id="9606"/>
    <lineage>
        <taxon>Eukaryota</taxon>
        <taxon>Metazoa</taxon>
        <taxon>Chordata</taxon>
        <taxon>Craniata</taxon>
        <taxon>Vertebrata</taxon>
        <taxon>Euteleostomi</taxon>
        <taxon>Mammalia</taxon>
        <taxon>Eutheria</taxon>
        <taxon>Euarchontoglires</taxon>
        <taxon>Primates</taxon>
        <taxon>Haplorrhini</taxon>
        <taxon>Catarrhini</taxon>
        <taxon>Hominidae</taxon>
        <taxon>Homo</taxon>
    </lineage>
</organism>
<protein>
    <recommendedName>
        <fullName evidence="10">Atos homolog protein A</fullName>
    </recommendedName>
</protein>
<keyword id="KW-0025">Alternative splicing</keyword>
<keyword id="KW-0539">Nucleus</keyword>
<keyword id="KW-1267">Proteomics identification</keyword>
<keyword id="KW-1185">Reference proteome</keyword>
<proteinExistence type="evidence at protein level"/>
<name>ATOSA_HUMAN</name>